<comment type="function">
    <text evidence="1">Heme-dependent dioxygenase that catalyzes the oxidative cleavage of the L-tryptophan (L-Trp) pyrrole ring and converts L-tryptophan to N-formyl-L-kynurenine. Catalyzes the oxidative cleavage of the indole moiety.</text>
</comment>
<comment type="catalytic activity">
    <reaction evidence="1">
        <text>L-tryptophan + O2 = N-formyl-L-kynurenine</text>
        <dbReference type="Rhea" id="RHEA:24536"/>
        <dbReference type="ChEBI" id="CHEBI:15379"/>
        <dbReference type="ChEBI" id="CHEBI:57912"/>
        <dbReference type="ChEBI" id="CHEBI:58629"/>
        <dbReference type="EC" id="1.13.11.11"/>
    </reaction>
</comment>
<comment type="cofactor">
    <cofactor evidence="1">
        <name>heme</name>
        <dbReference type="ChEBI" id="CHEBI:30413"/>
    </cofactor>
    <text evidence="1">Binds 1 heme group per subunit.</text>
</comment>
<comment type="pathway">
    <text evidence="1">Amino-acid degradation; L-tryptophan degradation via kynurenine pathway; L-kynurenine from L-tryptophan: step 1/2.</text>
</comment>
<comment type="subunit">
    <text evidence="1">Homotetramer.</text>
</comment>
<comment type="similarity">
    <text evidence="1">Belongs to the tryptophan 2,3-dioxygenase family.</text>
</comment>
<comment type="sequence caution" evidence="2">
    <conflict type="erroneous initiation">
        <sequence resource="EMBL-CDS" id="ACD17621"/>
    </conflict>
</comment>
<name>T23O_PARPJ</name>
<proteinExistence type="inferred from homology"/>
<accession>B2SY86</accession>
<reference key="1">
    <citation type="journal article" date="2011" name="J. Bacteriol.">
        <title>Complete genome sequence of the plant growth-promoting endophyte Burkholderia phytofirmans strain PsJN.</title>
        <authorList>
            <person name="Weilharter A."/>
            <person name="Mitter B."/>
            <person name="Shin M.V."/>
            <person name="Chain P.S."/>
            <person name="Nowak J."/>
            <person name="Sessitsch A."/>
        </authorList>
    </citation>
    <scope>NUCLEOTIDE SEQUENCE [LARGE SCALE GENOMIC DNA]</scope>
    <source>
        <strain>DSM 17436 / LMG 22146 / PsJN</strain>
    </source>
</reference>
<keyword id="KW-0223">Dioxygenase</keyword>
<keyword id="KW-0349">Heme</keyword>
<keyword id="KW-0408">Iron</keyword>
<keyword id="KW-0479">Metal-binding</keyword>
<keyword id="KW-0560">Oxidoreductase</keyword>
<keyword id="KW-0823">Tryptophan catabolism</keyword>
<protein>
    <recommendedName>
        <fullName evidence="1">Tryptophan 2,3-dioxygenase</fullName>
        <shortName evidence="1">TDO</shortName>
        <ecNumber evidence="1">1.13.11.11</ecNumber>
    </recommendedName>
    <alternativeName>
        <fullName evidence="1">Tryptamin 2,3-dioxygenase</fullName>
    </alternativeName>
    <alternativeName>
        <fullName evidence="1">Tryptophan oxygenase</fullName>
        <shortName evidence="1">TO</shortName>
        <shortName evidence="1">TRPO</shortName>
    </alternativeName>
    <alternativeName>
        <fullName evidence="1">Tryptophan pyrrolase</fullName>
    </alternativeName>
    <alternativeName>
        <fullName evidence="1">Tryptophanase</fullName>
    </alternativeName>
</protein>
<feature type="chain" id="PRO_0000360110" description="Tryptophan 2,3-dioxygenase">
    <location>
        <begin position="1"/>
        <end position="306"/>
    </location>
</feature>
<feature type="binding site" evidence="1">
    <location>
        <begin position="75"/>
        <end position="79"/>
    </location>
    <ligand>
        <name>substrate</name>
    </ligand>
</feature>
<feature type="binding site" evidence="1">
    <location>
        <position position="137"/>
    </location>
    <ligand>
        <name>substrate</name>
    </ligand>
</feature>
<feature type="binding site" evidence="1">
    <location>
        <position position="141"/>
    </location>
    <ligand>
        <name>substrate</name>
    </ligand>
</feature>
<feature type="binding site" description="axial binding residue" evidence="1">
    <location>
        <position position="264"/>
    </location>
    <ligand>
        <name>heme</name>
        <dbReference type="ChEBI" id="CHEBI:30413"/>
    </ligand>
    <ligandPart>
        <name>Fe</name>
        <dbReference type="ChEBI" id="CHEBI:18248"/>
    </ligandPart>
</feature>
<feature type="binding site" evidence="1">
    <location>
        <position position="278"/>
    </location>
    <ligand>
        <name>substrate</name>
    </ligand>
</feature>
<gene>
    <name evidence="1" type="primary">kynA</name>
    <name type="ordered locus">Bphyt_3229</name>
</gene>
<evidence type="ECO:0000255" key="1">
    <source>
        <dbReference type="HAMAP-Rule" id="MF_01972"/>
    </source>
</evidence>
<evidence type="ECO:0000305" key="2"/>
<dbReference type="EC" id="1.13.11.11" evidence="1"/>
<dbReference type="EMBL" id="CP001052">
    <property type="protein sequence ID" value="ACD17621.1"/>
    <property type="status" value="ALT_INIT"/>
    <property type="molecule type" value="Genomic_DNA"/>
</dbReference>
<dbReference type="RefSeq" id="WP_012434191.1">
    <property type="nucleotide sequence ID" value="NC_010681.1"/>
</dbReference>
<dbReference type="SMR" id="B2SY86"/>
<dbReference type="STRING" id="398527.Bphyt_3229"/>
<dbReference type="KEGG" id="bpy:Bphyt_3229"/>
<dbReference type="eggNOG" id="COG3483">
    <property type="taxonomic scope" value="Bacteria"/>
</dbReference>
<dbReference type="HOGENOM" id="CLU_063240_0_0_4"/>
<dbReference type="OrthoDB" id="9776847at2"/>
<dbReference type="UniPathway" id="UPA00333">
    <property type="reaction ID" value="UER00453"/>
</dbReference>
<dbReference type="Proteomes" id="UP000001739">
    <property type="component" value="Chromosome 1"/>
</dbReference>
<dbReference type="GO" id="GO:0020037">
    <property type="term" value="F:heme binding"/>
    <property type="evidence" value="ECO:0000250"/>
    <property type="project" value="UniProtKB"/>
</dbReference>
<dbReference type="GO" id="GO:0046872">
    <property type="term" value="F:metal ion binding"/>
    <property type="evidence" value="ECO:0007669"/>
    <property type="project" value="UniProtKB-KW"/>
</dbReference>
<dbReference type="GO" id="GO:0004833">
    <property type="term" value="F:tryptophan 2,3-dioxygenase activity"/>
    <property type="evidence" value="ECO:0000250"/>
    <property type="project" value="UniProtKB"/>
</dbReference>
<dbReference type="GO" id="GO:0019442">
    <property type="term" value="P:L-tryptophan catabolic process to acetyl-CoA"/>
    <property type="evidence" value="ECO:0007669"/>
    <property type="project" value="TreeGrafter"/>
</dbReference>
<dbReference type="GO" id="GO:0019441">
    <property type="term" value="P:L-tryptophan catabolic process to kynurenine"/>
    <property type="evidence" value="ECO:0000250"/>
    <property type="project" value="UniProtKB"/>
</dbReference>
<dbReference type="FunFam" id="1.20.58.480:FF:000001">
    <property type="entry name" value="Tryptophan 2,3-dioxygenase"/>
    <property type="match status" value="1"/>
</dbReference>
<dbReference type="Gene3D" id="1.20.58.480">
    <property type="match status" value="1"/>
</dbReference>
<dbReference type="HAMAP" id="MF_01972">
    <property type="entry name" value="T23O"/>
    <property type="match status" value="1"/>
</dbReference>
<dbReference type="InterPro" id="IPR037217">
    <property type="entry name" value="Trp/Indoleamine_2_3_dOase-like"/>
</dbReference>
<dbReference type="InterPro" id="IPR017485">
    <property type="entry name" value="Trp_2-3-dOase_bac"/>
</dbReference>
<dbReference type="InterPro" id="IPR004981">
    <property type="entry name" value="Trp_2_3_dOase"/>
</dbReference>
<dbReference type="NCBIfam" id="TIGR03036">
    <property type="entry name" value="trp_2_3_diox"/>
    <property type="match status" value="1"/>
</dbReference>
<dbReference type="PANTHER" id="PTHR10138">
    <property type="entry name" value="TRYPTOPHAN 2,3-DIOXYGENASE"/>
    <property type="match status" value="1"/>
</dbReference>
<dbReference type="PANTHER" id="PTHR10138:SF0">
    <property type="entry name" value="TRYPTOPHAN 2,3-DIOXYGENASE"/>
    <property type="match status" value="1"/>
</dbReference>
<dbReference type="Pfam" id="PF03301">
    <property type="entry name" value="Trp_dioxygenase"/>
    <property type="match status" value="1"/>
</dbReference>
<dbReference type="SUPFAM" id="SSF140959">
    <property type="entry name" value="Indolic compounds 2,3-dioxygenase-like"/>
    <property type="match status" value="1"/>
</dbReference>
<sequence length="306" mass="34697">MQTPGLPEEKPAQGCPFGHGAVASSVATPAADSGDGWHDAQLDFSESMSYGDYLSLGTVLDAQHPLSPDHNEMLFIIQHQTSELWMKLALYELRAALQAVHRDELPPAFKMLARVSRIMEQLVQAWSVLATMTPSEYTAMRPYLGSSSGFQSYQYRQIEFLLGNKNEQMLKPHAHRADVLAEVKASLEAPSFYDEVVRLLARRGFAISAARLERDWTQPTVHDASVEAAWLEVYRNPSQHWELYEMAEELVDLEDAFRQWRFRHVTTVERIIGFKQGTGGTSGATYLRKMLDVVLFPELWHVRTML</sequence>
<organism>
    <name type="scientific">Paraburkholderia phytofirmans (strain DSM 17436 / LMG 22146 / PsJN)</name>
    <name type="common">Burkholderia phytofirmans</name>
    <dbReference type="NCBI Taxonomy" id="398527"/>
    <lineage>
        <taxon>Bacteria</taxon>
        <taxon>Pseudomonadati</taxon>
        <taxon>Pseudomonadota</taxon>
        <taxon>Betaproteobacteria</taxon>
        <taxon>Burkholderiales</taxon>
        <taxon>Burkholderiaceae</taxon>
        <taxon>Paraburkholderia</taxon>
    </lineage>
</organism>